<gene>
    <name type="primary">BEH3</name>
    <name type="ordered locus">At4g18890</name>
    <name type="ORF">F13C5_60</name>
</gene>
<protein>
    <recommendedName>
        <fullName>BES1/BZR1 homolog protein 3</fullName>
    </recommendedName>
</protein>
<dbReference type="EMBL" id="AL021711">
    <property type="protein sequence ID" value="CAA16746.1"/>
    <property type="molecule type" value="Genomic_DNA"/>
</dbReference>
<dbReference type="EMBL" id="AL161549">
    <property type="protein sequence ID" value="CAB78891.1"/>
    <property type="molecule type" value="Genomic_DNA"/>
</dbReference>
<dbReference type="EMBL" id="CP002687">
    <property type="protein sequence ID" value="AEE84102.1"/>
    <property type="molecule type" value="Genomic_DNA"/>
</dbReference>
<dbReference type="EMBL" id="AK118850">
    <property type="protein sequence ID" value="BAC43438.1"/>
    <property type="molecule type" value="mRNA"/>
</dbReference>
<dbReference type="EMBL" id="AY088379">
    <property type="protein sequence ID" value="AAM65918.1"/>
    <property type="molecule type" value="mRNA"/>
</dbReference>
<dbReference type="PIR" id="T05026">
    <property type="entry name" value="T05026"/>
</dbReference>
<dbReference type="RefSeq" id="NP_193624.1">
    <property type="nucleotide sequence ID" value="NM_118005.3"/>
</dbReference>
<dbReference type="SMR" id="O49404"/>
<dbReference type="BioGRID" id="12916">
    <property type="interactions" value="2"/>
</dbReference>
<dbReference type="FunCoup" id="O49404">
    <property type="interactions" value="1"/>
</dbReference>
<dbReference type="IntAct" id="O49404">
    <property type="interactions" value="1"/>
</dbReference>
<dbReference type="STRING" id="3702.O49404"/>
<dbReference type="GlyGen" id="O49404">
    <property type="glycosylation" value="1 site"/>
</dbReference>
<dbReference type="iPTMnet" id="O49404"/>
<dbReference type="PaxDb" id="3702-AT4G18890.1"/>
<dbReference type="ProteomicsDB" id="240656"/>
<dbReference type="EnsemblPlants" id="AT4G18890.1">
    <property type="protein sequence ID" value="AT4G18890.1"/>
    <property type="gene ID" value="AT4G18890"/>
</dbReference>
<dbReference type="GeneID" id="827623"/>
<dbReference type="Gramene" id="AT4G18890.1">
    <property type="protein sequence ID" value="AT4G18890.1"/>
    <property type="gene ID" value="AT4G18890"/>
</dbReference>
<dbReference type="KEGG" id="ath:AT4G18890"/>
<dbReference type="Araport" id="AT4G18890"/>
<dbReference type="TAIR" id="AT4G18890">
    <property type="gene designation" value="BEH3"/>
</dbReference>
<dbReference type="eggNOG" id="ENOG502QQEG">
    <property type="taxonomic scope" value="Eukaryota"/>
</dbReference>
<dbReference type="HOGENOM" id="CLU_036256_0_0_1"/>
<dbReference type="InParanoid" id="O49404"/>
<dbReference type="OMA" id="MATEFAF"/>
<dbReference type="OrthoDB" id="667790at2759"/>
<dbReference type="PhylomeDB" id="O49404"/>
<dbReference type="PRO" id="PR:O49404"/>
<dbReference type="Proteomes" id="UP000006548">
    <property type="component" value="Chromosome 4"/>
</dbReference>
<dbReference type="ExpressionAtlas" id="O49404">
    <property type="expression patterns" value="baseline and differential"/>
</dbReference>
<dbReference type="GO" id="GO:0003677">
    <property type="term" value="F:DNA binding"/>
    <property type="evidence" value="ECO:0007669"/>
    <property type="project" value="UniProtKB-KW"/>
</dbReference>
<dbReference type="GO" id="GO:0003700">
    <property type="term" value="F:DNA-binding transcription factor activity"/>
    <property type="evidence" value="ECO:0007669"/>
    <property type="project" value="InterPro"/>
</dbReference>
<dbReference type="GO" id="GO:0009742">
    <property type="term" value="P:brassinosteroid mediated signaling pathway"/>
    <property type="evidence" value="ECO:0007669"/>
    <property type="project" value="InterPro"/>
</dbReference>
<dbReference type="GO" id="GO:0006351">
    <property type="term" value="P:DNA-templated transcription"/>
    <property type="evidence" value="ECO:0007669"/>
    <property type="project" value="InterPro"/>
</dbReference>
<dbReference type="GO" id="GO:0006355">
    <property type="term" value="P:regulation of DNA-templated transcription"/>
    <property type="evidence" value="ECO:0000304"/>
    <property type="project" value="TAIR"/>
</dbReference>
<dbReference type="InterPro" id="IPR008540">
    <property type="entry name" value="BES1_N"/>
</dbReference>
<dbReference type="InterPro" id="IPR033264">
    <property type="entry name" value="BZR"/>
</dbReference>
<dbReference type="PANTHER" id="PTHR31506">
    <property type="entry name" value="BES1/BZR1 HOMOLOG PROTEIN 3-RELATED"/>
    <property type="match status" value="1"/>
</dbReference>
<dbReference type="PANTHER" id="PTHR31506:SF2">
    <property type="entry name" value="BES1_BZR1 HOMOLOG PROTEIN 3"/>
    <property type="match status" value="1"/>
</dbReference>
<dbReference type="Pfam" id="PF05687">
    <property type="entry name" value="BES1_N"/>
    <property type="match status" value="1"/>
</dbReference>
<evidence type="ECO:0000250" key="1"/>
<evidence type="ECO:0000250" key="2">
    <source>
        <dbReference type="UniProtKB" id="Q9LN63"/>
    </source>
</evidence>
<evidence type="ECO:0000256" key="3">
    <source>
        <dbReference type="SAM" id="MobiDB-lite"/>
    </source>
</evidence>
<evidence type="ECO:0000269" key="4">
    <source>
    </source>
</evidence>
<evidence type="ECO:0000305" key="5"/>
<keyword id="KW-0238">DNA-binding</keyword>
<keyword id="KW-0597">Phosphoprotein</keyword>
<keyword id="KW-1185">Reference proteome</keyword>
<keyword id="KW-0804">Transcription</keyword>
<keyword id="KW-0805">Transcription regulation</keyword>
<reference key="1">
    <citation type="journal article" date="1999" name="Nature">
        <title>Sequence and analysis of chromosome 4 of the plant Arabidopsis thaliana.</title>
        <authorList>
            <person name="Mayer K.F.X."/>
            <person name="Schueller C."/>
            <person name="Wambutt R."/>
            <person name="Murphy G."/>
            <person name="Volckaert G."/>
            <person name="Pohl T."/>
            <person name="Duesterhoeft A."/>
            <person name="Stiekema W."/>
            <person name="Entian K.-D."/>
            <person name="Terryn N."/>
            <person name="Harris B."/>
            <person name="Ansorge W."/>
            <person name="Brandt P."/>
            <person name="Grivell L.A."/>
            <person name="Rieger M."/>
            <person name="Weichselgartner M."/>
            <person name="de Simone V."/>
            <person name="Obermaier B."/>
            <person name="Mache R."/>
            <person name="Mueller M."/>
            <person name="Kreis M."/>
            <person name="Delseny M."/>
            <person name="Puigdomenech P."/>
            <person name="Watson M."/>
            <person name="Schmidtheini T."/>
            <person name="Reichert B."/>
            <person name="Portetelle D."/>
            <person name="Perez-Alonso M."/>
            <person name="Boutry M."/>
            <person name="Bancroft I."/>
            <person name="Vos P."/>
            <person name="Hoheisel J."/>
            <person name="Zimmermann W."/>
            <person name="Wedler H."/>
            <person name="Ridley P."/>
            <person name="Langham S.-A."/>
            <person name="McCullagh B."/>
            <person name="Bilham L."/>
            <person name="Robben J."/>
            <person name="van der Schueren J."/>
            <person name="Grymonprez B."/>
            <person name="Chuang Y.-J."/>
            <person name="Vandenbussche F."/>
            <person name="Braeken M."/>
            <person name="Weltjens I."/>
            <person name="Voet M."/>
            <person name="Bastiaens I."/>
            <person name="Aert R."/>
            <person name="Defoor E."/>
            <person name="Weitzenegger T."/>
            <person name="Bothe G."/>
            <person name="Ramsperger U."/>
            <person name="Hilbert H."/>
            <person name="Braun M."/>
            <person name="Holzer E."/>
            <person name="Brandt A."/>
            <person name="Peters S."/>
            <person name="van Staveren M."/>
            <person name="Dirkse W."/>
            <person name="Mooijman P."/>
            <person name="Klein Lankhorst R."/>
            <person name="Rose M."/>
            <person name="Hauf J."/>
            <person name="Koetter P."/>
            <person name="Berneiser S."/>
            <person name="Hempel S."/>
            <person name="Feldpausch M."/>
            <person name="Lamberth S."/>
            <person name="Van den Daele H."/>
            <person name="De Keyser A."/>
            <person name="Buysshaert C."/>
            <person name="Gielen J."/>
            <person name="Villarroel R."/>
            <person name="De Clercq R."/>
            <person name="van Montagu M."/>
            <person name="Rogers J."/>
            <person name="Cronin A."/>
            <person name="Quail M.A."/>
            <person name="Bray-Allen S."/>
            <person name="Clark L."/>
            <person name="Doggett J."/>
            <person name="Hall S."/>
            <person name="Kay M."/>
            <person name="Lennard N."/>
            <person name="McLay K."/>
            <person name="Mayes R."/>
            <person name="Pettett A."/>
            <person name="Rajandream M.A."/>
            <person name="Lyne M."/>
            <person name="Benes V."/>
            <person name="Rechmann S."/>
            <person name="Borkova D."/>
            <person name="Bloecker H."/>
            <person name="Scharfe M."/>
            <person name="Grimm M."/>
            <person name="Loehnert T.-H."/>
            <person name="Dose S."/>
            <person name="de Haan M."/>
            <person name="Maarse A.C."/>
            <person name="Schaefer M."/>
            <person name="Mueller-Auer S."/>
            <person name="Gabel C."/>
            <person name="Fuchs M."/>
            <person name="Fartmann B."/>
            <person name="Granderath K."/>
            <person name="Dauner D."/>
            <person name="Herzl A."/>
            <person name="Neumann S."/>
            <person name="Argiriou A."/>
            <person name="Vitale D."/>
            <person name="Liguori R."/>
            <person name="Piravandi E."/>
            <person name="Massenet O."/>
            <person name="Quigley F."/>
            <person name="Clabauld G."/>
            <person name="Muendlein A."/>
            <person name="Felber R."/>
            <person name="Schnabl S."/>
            <person name="Hiller R."/>
            <person name="Schmidt W."/>
            <person name="Lecharny A."/>
            <person name="Aubourg S."/>
            <person name="Chefdor F."/>
            <person name="Cooke R."/>
            <person name="Berger C."/>
            <person name="Monfort A."/>
            <person name="Casacuberta E."/>
            <person name="Gibbons T."/>
            <person name="Weber N."/>
            <person name="Vandenbol M."/>
            <person name="Bargues M."/>
            <person name="Terol J."/>
            <person name="Torres A."/>
            <person name="Perez-Perez A."/>
            <person name="Purnelle B."/>
            <person name="Bent E."/>
            <person name="Johnson S."/>
            <person name="Tacon D."/>
            <person name="Jesse T."/>
            <person name="Heijnen L."/>
            <person name="Schwarz S."/>
            <person name="Scholler P."/>
            <person name="Heber S."/>
            <person name="Francs P."/>
            <person name="Bielke C."/>
            <person name="Frishman D."/>
            <person name="Haase D."/>
            <person name="Lemcke K."/>
            <person name="Mewes H.-W."/>
            <person name="Stocker S."/>
            <person name="Zaccaria P."/>
            <person name="Bevan M."/>
            <person name="Wilson R.K."/>
            <person name="de la Bastide M."/>
            <person name="Habermann K."/>
            <person name="Parnell L."/>
            <person name="Dedhia N."/>
            <person name="Gnoj L."/>
            <person name="Schutz K."/>
            <person name="Huang E."/>
            <person name="Spiegel L."/>
            <person name="Sekhon M."/>
            <person name="Murray J."/>
            <person name="Sheet P."/>
            <person name="Cordes M."/>
            <person name="Abu-Threideh J."/>
            <person name="Stoneking T."/>
            <person name="Kalicki J."/>
            <person name="Graves T."/>
            <person name="Harmon G."/>
            <person name="Edwards J."/>
            <person name="Latreille P."/>
            <person name="Courtney L."/>
            <person name="Cloud J."/>
            <person name="Abbott A."/>
            <person name="Scott K."/>
            <person name="Johnson D."/>
            <person name="Minx P."/>
            <person name="Bentley D."/>
            <person name="Fulton B."/>
            <person name="Miller N."/>
            <person name="Greco T."/>
            <person name="Kemp K."/>
            <person name="Kramer J."/>
            <person name="Fulton L."/>
            <person name="Mardis E."/>
            <person name="Dante M."/>
            <person name="Pepin K."/>
            <person name="Hillier L.W."/>
            <person name="Nelson J."/>
            <person name="Spieth J."/>
            <person name="Ryan E."/>
            <person name="Andrews S."/>
            <person name="Geisel C."/>
            <person name="Layman D."/>
            <person name="Du H."/>
            <person name="Ali J."/>
            <person name="Berghoff A."/>
            <person name="Jones K."/>
            <person name="Drone K."/>
            <person name="Cotton M."/>
            <person name="Joshu C."/>
            <person name="Antonoiu B."/>
            <person name="Zidanic M."/>
            <person name="Strong C."/>
            <person name="Sun H."/>
            <person name="Lamar B."/>
            <person name="Yordan C."/>
            <person name="Ma P."/>
            <person name="Zhong J."/>
            <person name="Preston R."/>
            <person name="Vil D."/>
            <person name="Shekher M."/>
            <person name="Matero A."/>
            <person name="Shah R."/>
            <person name="Swaby I.K."/>
            <person name="O'Shaughnessy A."/>
            <person name="Rodriguez M."/>
            <person name="Hoffman J."/>
            <person name="Till S."/>
            <person name="Granat S."/>
            <person name="Shohdy N."/>
            <person name="Hasegawa A."/>
            <person name="Hameed A."/>
            <person name="Lodhi M."/>
            <person name="Johnson A."/>
            <person name="Chen E."/>
            <person name="Marra M.A."/>
            <person name="Martienssen R."/>
            <person name="McCombie W.R."/>
        </authorList>
    </citation>
    <scope>NUCLEOTIDE SEQUENCE [LARGE SCALE GENOMIC DNA]</scope>
    <source>
        <strain>cv. Columbia</strain>
    </source>
</reference>
<reference key="2">
    <citation type="journal article" date="2017" name="Plant J.">
        <title>Araport11: a complete reannotation of the Arabidopsis thaliana reference genome.</title>
        <authorList>
            <person name="Cheng C.Y."/>
            <person name="Krishnakumar V."/>
            <person name="Chan A.P."/>
            <person name="Thibaud-Nissen F."/>
            <person name="Schobel S."/>
            <person name="Town C.D."/>
        </authorList>
    </citation>
    <scope>GENOME REANNOTATION</scope>
    <source>
        <strain>cv. Columbia</strain>
    </source>
</reference>
<reference key="3">
    <citation type="journal article" date="2002" name="Science">
        <title>Functional annotation of a full-length Arabidopsis cDNA collection.</title>
        <authorList>
            <person name="Seki M."/>
            <person name="Narusaka M."/>
            <person name="Kamiya A."/>
            <person name="Ishida J."/>
            <person name="Satou M."/>
            <person name="Sakurai T."/>
            <person name="Nakajima M."/>
            <person name="Enju A."/>
            <person name="Akiyama K."/>
            <person name="Oono Y."/>
            <person name="Muramatsu M."/>
            <person name="Hayashizaki Y."/>
            <person name="Kawai J."/>
            <person name="Carninci P."/>
            <person name="Itoh M."/>
            <person name="Ishii Y."/>
            <person name="Arakawa T."/>
            <person name="Shibata K."/>
            <person name="Shinagawa A."/>
            <person name="Shinozaki K."/>
        </authorList>
    </citation>
    <scope>NUCLEOTIDE SEQUENCE [LARGE SCALE MRNA]</scope>
    <source>
        <strain>cv. Columbia</strain>
    </source>
</reference>
<reference key="4">
    <citation type="submission" date="2002-03" db="EMBL/GenBank/DDBJ databases">
        <title>Full-length cDNA from Arabidopsis thaliana.</title>
        <authorList>
            <person name="Brover V.V."/>
            <person name="Troukhan M.E."/>
            <person name="Alexandrov N.A."/>
            <person name="Lu Y.-P."/>
            <person name="Flavell R.B."/>
            <person name="Feldmann K.A."/>
        </authorList>
    </citation>
    <scope>NUCLEOTIDE SEQUENCE [LARGE SCALE MRNA]</scope>
</reference>
<reference key="5">
    <citation type="journal article" date="2005" name="Cell">
        <title>A new class of transcription factors mediates brassinosteroid-regulated gene expression in Arabidopsis.</title>
        <authorList>
            <person name="Yin Y."/>
            <person name="Vafeados D."/>
            <person name="Tao Y."/>
            <person name="Yoshida S."/>
            <person name="Asami T."/>
            <person name="Chory J."/>
        </authorList>
    </citation>
    <scope>IDENTIFICATION</scope>
    <scope>PHOSPHORYLATION</scope>
</reference>
<comment type="interaction">
    <interactant intactId="EBI-25514571">
        <id>O49404</id>
    </interactant>
    <interactant intactId="EBI-1238323">
        <id>Q39010</id>
        <label>ASK6</label>
    </interactant>
    <organismsDiffer>false</organismsDiffer>
    <experiments>3</experiments>
</comment>
<comment type="PTM">
    <text evidence="4">Phosphorylated. Phosphorylation increases protein degradation.</text>
</comment>
<comment type="similarity">
    <text evidence="5">Belongs to the BZR/LAT61 family.</text>
</comment>
<proteinExistence type="evidence at protein level"/>
<organism>
    <name type="scientific">Arabidopsis thaliana</name>
    <name type="common">Mouse-ear cress</name>
    <dbReference type="NCBI Taxonomy" id="3702"/>
    <lineage>
        <taxon>Eukaryota</taxon>
        <taxon>Viridiplantae</taxon>
        <taxon>Streptophyta</taxon>
        <taxon>Embryophyta</taxon>
        <taxon>Tracheophyta</taxon>
        <taxon>Spermatophyta</taxon>
        <taxon>Magnoliopsida</taxon>
        <taxon>eudicotyledons</taxon>
        <taxon>Gunneridae</taxon>
        <taxon>Pentapetalae</taxon>
        <taxon>rosids</taxon>
        <taxon>malvids</taxon>
        <taxon>Brassicales</taxon>
        <taxon>Brassicaceae</taxon>
        <taxon>Camelineae</taxon>
        <taxon>Arabidopsis</taxon>
    </lineage>
</organism>
<feature type="chain" id="PRO_0000113275" description="BES1/BZR1 homolog protein 3">
    <location>
        <begin position="1"/>
        <end position="284"/>
    </location>
</feature>
<feature type="region of interest" description="Disordered" evidence="3">
    <location>
        <begin position="1"/>
        <end position="21"/>
    </location>
</feature>
<feature type="region of interest" description="Required for DNA-binding" evidence="1">
    <location>
        <begin position="6"/>
        <end position="88"/>
    </location>
</feature>
<feature type="region of interest" description="Disordered" evidence="3">
    <location>
        <begin position="85"/>
        <end position="116"/>
    </location>
</feature>
<feature type="compositionally biased region" description="Polar residues" evidence="3">
    <location>
        <begin position="85"/>
        <end position="97"/>
    </location>
</feature>
<feature type="compositionally biased region" description="Low complexity" evidence="3">
    <location>
        <begin position="98"/>
        <end position="114"/>
    </location>
</feature>
<feature type="modified residue" description="Phosphothreonine" evidence="2">
    <location>
        <position position="153"/>
    </location>
</feature>
<accession>O49404</accession>
<sequence>MTSGTRTPTWKERENNKRRERRRRAIAAKIFAGLRIHGNFKLPKHCDNNEVLKALCNEAGWTVEDDGTTYRKGCKPMDRMDLMNGSTSASPCSSYQHSPRASYNPSPSSSSFPSPTNPFGDANSLIPWLKNLSSNSPSKLPFFHGNSISAPVTPPLARSPTRDQVTIPDSGWLSGMQTPQSGPSSPTFSLVSRNPFFDKEAFKMGDCNSPMWTPGQSGNCSPAIPAGVDQNSDVPMADGMTAEFAFGCNAMAANGMVKPWEGERIHGECVSDDLELTLGNSRTR</sequence>
<name>BEH3_ARATH</name>